<protein>
    <recommendedName>
        <fullName evidence="3">Ubiquitin-ribosomal protein eL40 fusion protein</fullName>
    </recommendedName>
    <component>
        <recommendedName>
            <fullName>Ubiquitin</fullName>
        </recommendedName>
    </component>
    <component>
        <recommendedName>
            <fullName evidence="3">Large ribosomal subunit protein eL40</fullName>
        </recommendedName>
        <alternativeName>
            <fullName>60S ribosomal protein L40</fullName>
        </alternativeName>
        <alternativeName>
            <fullName>CEP52</fullName>
        </alternativeName>
    </component>
</protein>
<sequence length="128" mass="14629">MQIFVKTLTGKTITLEVESSDTIDNVKAKIQDKEGIPPDQQRLIFAGKQLEDGRTLADYNIQKESTLHLVLRLRGGIIEPSLMALARKYNQAKMICRKCYARLHPRAVNCRKKKCGHSNQLRPKKKIK</sequence>
<feature type="chain" id="PRO_0000114836" description="Ubiquitin">
    <location>
        <begin position="1"/>
        <end position="76"/>
    </location>
</feature>
<feature type="chain" id="PRO_0000138759" description="Large ribosomal subunit protein eL40">
    <location>
        <begin position="77"/>
        <end position="128"/>
    </location>
</feature>
<feature type="domain" description="Ubiquitin-like" evidence="2">
    <location>
        <begin position="1"/>
        <end position="76"/>
    </location>
</feature>
<feature type="cross-link" description="Glycyl lysine isopeptide (Gly-Lys) (interchain with K-? in acceptor proteins)" evidence="2">
    <location>
        <position position="76"/>
    </location>
</feature>
<comment type="function">
    <molecule>Ubiquitin</molecule>
    <text evidence="1">Exists either covalently attached to another protein, or free (unanchored). When covalently bound, it is conjugated to target proteins via an isopeptide bond either as a monomer (monoubiquitin), a polymer linked via different Lys residues of the ubiquitin (polyubiquitin chains) or a linear polymer linked via the initiator Met of the ubiquitin (linear polyubiquitin chains). Polyubiquitin chains, when attached to a target protein, have different functions depending on the Lys residue of the ubiquitin that is linked: Lys-48-linked is involved in protein degradation via the proteasome. Linear polymer chains formed via attachment by the initiator Met lead to cell signaling. Ubiquitin is usually conjugated to Lys residues of target proteins, however, in rare cases, conjugation to Cys or Ser residues has been observed. When polyubiquitin is free (unanchored-polyubiquitin), it also has distinct roles, such as in activation of protein kinases, and in signaling (By similarity).</text>
</comment>
<comment type="function">
    <molecule>Large ribosomal subunit protein eL40</molecule>
    <text>Component of the 60S subunit of the ribosome.</text>
</comment>
<comment type="subunit">
    <molecule>Large ribosomal subunit protein eL40</molecule>
    <text evidence="1">Part of the 60S ribosomal subunit.</text>
</comment>
<comment type="subcellular location">
    <molecule>Ubiquitin</molecule>
    <subcellularLocation>
        <location evidence="1">Cytoplasm</location>
    </subcellularLocation>
    <subcellularLocation>
        <location evidence="1">Nucleus</location>
    </subcellularLocation>
</comment>
<comment type="subcellular location">
    <molecule>Large ribosomal subunit protein eL40</molecule>
    <subcellularLocation>
        <location evidence="1">Cytoplasm</location>
    </subcellularLocation>
</comment>
<comment type="miscellaneous">
    <text>Ubiquitin is generally synthesized as a polyubiquitin precursor with tandem head to tail repeats. Often, there are one to three additional amino acids after the last repeat, removed in the mature protein. Alternatively, ubiquitin extension protein is synthesized as a single copy of ubiquitin fused to a ribosomal protein (either eL40 or eS31) or to an ubiquitin-related protein (either RUB1 or RUB2). Following translation, extension protein is cleaved from ubiquitin.</text>
</comment>
<comment type="similarity">
    <text evidence="3">In the N-terminal section; belongs to the ubiquitin family.</text>
</comment>
<comment type="similarity">
    <text evidence="3">In the C-terminal section; belongs to the eukaryotic ribosomal protein eL40 family.</text>
</comment>
<reference key="1">
    <citation type="submission" date="1993-07" db="EMBL/GenBank/DDBJ databases">
        <authorList>
            <person name="Song S."/>
            <person name="Choi Y."/>
        </authorList>
    </citation>
    <scope>NUCLEOTIDE SEQUENCE [MRNA]</scope>
    <source>
        <strain>cv. Jangwon</strain>
        <tissue>Shoot</tissue>
    </source>
</reference>
<organism>
    <name type="scientific">Brassica rapa subsp. pekinensis</name>
    <name type="common">Chinese cabbage</name>
    <name type="synonym">Brassica pekinensis</name>
    <dbReference type="NCBI Taxonomy" id="51351"/>
    <lineage>
        <taxon>Eukaryota</taxon>
        <taxon>Viridiplantae</taxon>
        <taxon>Streptophyta</taxon>
        <taxon>Embryophyta</taxon>
        <taxon>Tracheophyta</taxon>
        <taxon>Spermatophyta</taxon>
        <taxon>Magnoliopsida</taxon>
        <taxon>eudicotyledons</taxon>
        <taxon>Gunneridae</taxon>
        <taxon>Pentapetalae</taxon>
        <taxon>rosids</taxon>
        <taxon>malvids</taxon>
        <taxon>Brassicales</taxon>
        <taxon>Brassicaceae</taxon>
        <taxon>Brassiceae</taxon>
        <taxon>Brassica</taxon>
    </lineage>
</organism>
<keyword id="KW-0963">Cytoplasm</keyword>
<keyword id="KW-1017">Isopeptide bond</keyword>
<keyword id="KW-0539">Nucleus</keyword>
<keyword id="KW-0687">Ribonucleoprotein</keyword>
<keyword id="KW-0689">Ribosomal protein</keyword>
<evidence type="ECO:0000250" key="1"/>
<evidence type="ECO:0000255" key="2">
    <source>
        <dbReference type="PROSITE-ProRule" id="PRU00214"/>
    </source>
</evidence>
<evidence type="ECO:0000305" key="3"/>
<accession>P51423</accession>
<accession>O82079</accession>
<accession>P03993</accession>
<accession>P69311</accession>
<dbReference type="EMBL" id="Z24738">
    <property type="protein sequence ID" value="CAA80863.1"/>
    <property type="molecule type" value="mRNA"/>
</dbReference>
<dbReference type="EMBL" id="L21898">
    <property type="protein sequence ID" value="AAA33014.1"/>
    <property type="molecule type" value="mRNA"/>
</dbReference>
<dbReference type="PIR" id="S34662">
    <property type="entry name" value="S34662"/>
</dbReference>
<dbReference type="SMR" id="P51423"/>
<dbReference type="FunCoup" id="P51423">
    <property type="interactions" value="3388"/>
</dbReference>
<dbReference type="STRING" id="51351.P51423"/>
<dbReference type="eggNOG" id="KOG0001">
    <property type="taxonomic scope" value="Eukaryota"/>
</dbReference>
<dbReference type="InParanoid" id="P51423"/>
<dbReference type="GO" id="GO:0005737">
    <property type="term" value="C:cytoplasm"/>
    <property type="evidence" value="ECO:0007669"/>
    <property type="project" value="UniProtKB-SubCell"/>
</dbReference>
<dbReference type="GO" id="GO:0005634">
    <property type="term" value="C:nucleus"/>
    <property type="evidence" value="ECO:0007669"/>
    <property type="project" value="UniProtKB-SubCell"/>
</dbReference>
<dbReference type="GO" id="GO:1990904">
    <property type="term" value="C:ribonucleoprotein complex"/>
    <property type="evidence" value="ECO:0007669"/>
    <property type="project" value="UniProtKB-KW"/>
</dbReference>
<dbReference type="GO" id="GO:0005840">
    <property type="term" value="C:ribosome"/>
    <property type="evidence" value="ECO:0007669"/>
    <property type="project" value="UniProtKB-KW"/>
</dbReference>
<dbReference type="GO" id="GO:0003729">
    <property type="term" value="F:mRNA binding"/>
    <property type="evidence" value="ECO:0007669"/>
    <property type="project" value="UniProtKB-ARBA"/>
</dbReference>
<dbReference type="GO" id="GO:0003735">
    <property type="term" value="F:structural constituent of ribosome"/>
    <property type="evidence" value="ECO:0007669"/>
    <property type="project" value="InterPro"/>
</dbReference>
<dbReference type="GO" id="GO:0006412">
    <property type="term" value="P:translation"/>
    <property type="evidence" value="ECO:0007669"/>
    <property type="project" value="InterPro"/>
</dbReference>
<dbReference type="CDD" id="cd01803">
    <property type="entry name" value="Ubl_ubiquitin"/>
    <property type="match status" value="1"/>
</dbReference>
<dbReference type="FunFam" id="3.10.20.90:FF:000014">
    <property type="entry name" value="Ubiquitin-60S ribosomal L40 fusion"/>
    <property type="match status" value="1"/>
</dbReference>
<dbReference type="FunFam" id="4.10.1060.50:FF:000001">
    <property type="entry name" value="ubiquitin-60S ribosomal protein L40"/>
    <property type="match status" value="1"/>
</dbReference>
<dbReference type="Gene3D" id="4.10.1060.50">
    <property type="match status" value="1"/>
</dbReference>
<dbReference type="Gene3D" id="3.10.20.90">
    <property type="entry name" value="Phosphatidylinositol 3-kinase Catalytic Subunit, Chain A, domain 1"/>
    <property type="match status" value="1"/>
</dbReference>
<dbReference type="InterPro" id="IPR001975">
    <property type="entry name" value="Ribosomal_eL40_dom"/>
</dbReference>
<dbReference type="InterPro" id="IPR038587">
    <property type="entry name" value="Ribosomal_eL40_sf"/>
</dbReference>
<dbReference type="InterPro" id="IPR011332">
    <property type="entry name" value="Ribosomal_zn-bd"/>
</dbReference>
<dbReference type="InterPro" id="IPR000626">
    <property type="entry name" value="Ubiquitin-like_dom"/>
</dbReference>
<dbReference type="InterPro" id="IPR029071">
    <property type="entry name" value="Ubiquitin-like_domsf"/>
</dbReference>
<dbReference type="InterPro" id="IPR019954">
    <property type="entry name" value="Ubiquitin_CS"/>
</dbReference>
<dbReference type="InterPro" id="IPR019956">
    <property type="entry name" value="Ubiquitin_dom"/>
</dbReference>
<dbReference type="InterPro" id="IPR050158">
    <property type="entry name" value="Ubiquitin_ubiquitin-like"/>
</dbReference>
<dbReference type="PANTHER" id="PTHR10666">
    <property type="entry name" value="UBIQUITIN"/>
    <property type="match status" value="1"/>
</dbReference>
<dbReference type="Pfam" id="PF01020">
    <property type="entry name" value="Ribosomal_L40e"/>
    <property type="match status" value="1"/>
</dbReference>
<dbReference type="Pfam" id="PF00240">
    <property type="entry name" value="ubiquitin"/>
    <property type="match status" value="1"/>
</dbReference>
<dbReference type="PRINTS" id="PR00348">
    <property type="entry name" value="UBIQUITIN"/>
</dbReference>
<dbReference type="SMART" id="SM01377">
    <property type="entry name" value="Ribosomal_L40e"/>
    <property type="match status" value="1"/>
</dbReference>
<dbReference type="SMART" id="SM00213">
    <property type="entry name" value="UBQ"/>
    <property type="match status" value="1"/>
</dbReference>
<dbReference type="SUPFAM" id="SSF54236">
    <property type="entry name" value="Ubiquitin-like"/>
    <property type="match status" value="1"/>
</dbReference>
<dbReference type="SUPFAM" id="SSF57829">
    <property type="entry name" value="Zn-binding ribosomal proteins"/>
    <property type="match status" value="1"/>
</dbReference>
<dbReference type="PROSITE" id="PS00299">
    <property type="entry name" value="UBIQUITIN_1"/>
    <property type="match status" value="1"/>
</dbReference>
<dbReference type="PROSITE" id="PS50053">
    <property type="entry name" value="UBIQUITIN_2"/>
    <property type="match status" value="1"/>
</dbReference>
<name>RL40_BRARP</name>
<proteinExistence type="evidence at transcript level"/>